<name>EFTU_BLOPB</name>
<gene>
    <name evidence="2" type="primary">tuf</name>
    <name type="ordered locus">BPEN_584</name>
</gene>
<proteinExistence type="inferred from homology"/>
<accession>Q492B2</accession>
<comment type="function">
    <text evidence="2">GTP hydrolase that promotes the GTP-dependent binding of aminoacyl-tRNA to the A-site of ribosomes during protein biosynthesis.</text>
</comment>
<comment type="catalytic activity">
    <reaction evidence="2">
        <text>GTP + H2O = GDP + phosphate + H(+)</text>
        <dbReference type="Rhea" id="RHEA:19669"/>
        <dbReference type="ChEBI" id="CHEBI:15377"/>
        <dbReference type="ChEBI" id="CHEBI:15378"/>
        <dbReference type="ChEBI" id="CHEBI:37565"/>
        <dbReference type="ChEBI" id="CHEBI:43474"/>
        <dbReference type="ChEBI" id="CHEBI:58189"/>
        <dbReference type="EC" id="3.6.5.3"/>
    </reaction>
    <physiologicalReaction direction="left-to-right" evidence="2">
        <dbReference type="Rhea" id="RHEA:19670"/>
    </physiologicalReaction>
</comment>
<comment type="subunit">
    <text evidence="2">Monomer.</text>
</comment>
<comment type="subcellular location">
    <subcellularLocation>
        <location evidence="2">Cytoplasm</location>
    </subcellularLocation>
</comment>
<comment type="similarity">
    <text evidence="2">Belongs to the TRAFAC class translation factor GTPase superfamily. Classic translation factor GTPase family. EF-Tu/EF-1A subfamily.</text>
</comment>
<feature type="chain" id="PRO_1000015618" description="Elongation factor Tu">
    <location>
        <begin position="1"/>
        <end position="394"/>
    </location>
</feature>
<feature type="domain" description="tr-type G">
    <location>
        <begin position="10"/>
        <end position="204"/>
    </location>
</feature>
<feature type="region of interest" description="G1" evidence="1">
    <location>
        <begin position="19"/>
        <end position="26"/>
    </location>
</feature>
<feature type="region of interest" description="G2" evidence="1">
    <location>
        <begin position="60"/>
        <end position="64"/>
    </location>
</feature>
<feature type="region of interest" description="G3" evidence="1">
    <location>
        <begin position="81"/>
        <end position="84"/>
    </location>
</feature>
<feature type="region of interest" description="G4" evidence="1">
    <location>
        <begin position="136"/>
        <end position="139"/>
    </location>
</feature>
<feature type="region of interest" description="G5" evidence="1">
    <location>
        <begin position="174"/>
        <end position="176"/>
    </location>
</feature>
<feature type="binding site" evidence="2">
    <location>
        <begin position="19"/>
        <end position="26"/>
    </location>
    <ligand>
        <name>GTP</name>
        <dbReference type="ChEBI" id="CHEBI:37565"/>
    </ligand>
</feature>
<feature type="binding site" evidence="2">
    <location>
        <position position="26"/>
    </location>
    <ligand>
        <name>Mg(2+)</name>
        <dbReference type="ChEBI" id="CHEBI:18420"/>
    </ligand>
</feature>
<feature type="binding site" evidence="2">
    <location>
        <begin position="81"/>
        <end position="85"/>
    </location>
    <ligand>
        <name>GTP</name>
        <dbReference type="ChEBI" id="CHEBI:37565"/>
    </ligand>
</feature>
<feature type="binding site" evidence="2">
    <location>
        <begin position="136"/>
        <end position="139"/>
    </location>
    <ligand>
        <name>GTP</name>
        <dbReference type="ChEBI" id="CHEBI:37565"/>
    </ligand>
</feature>
<evidence type="ECO:0000250" key="1"/>
<evidence type="ECO:0000255" key="2">
    <source>
        <dbReference type="HAMAP-Rule" id="MF_00118"/>
    </source>
</evidence>
<sequence length="394" mass="43841">MSKEKFKRIKPHINVGTIGHVDHGKTTLTAAITTVLSKKYGGYARAFDQIDNAPEEKARGITINTSHVEYDTAYRHYAHVDCPGHADYIKNMITGAAQMDGAILVVAATDGPMPQTREHILLARQVGVPHIIVFMNKCDMVNDEELLELVEMEMRELLSQYDFPGDNTPIIRGSALKALENDEIWSNKILELSDALDNYIPEPKRVVDQPFLLPIEDVFSISGRGTVVTGRIERGVIRVGEEIEIVGIKDTIKTTCTGVEMFRKLLDEGRAGENVGVLLRGTKRDEVERGQVLSKPGYIKPHSHFESEVYILNKDEGGRHTPFFKGYRPQFYFRTTDITGTIELPEGADMVMPGDNIRMIVHLIAPIAMDDGLRFAIREGGRTIGAGIVSKIIS</sequence>
<reference key="1">
    <citation type="journal article" date="2005" name="Genome Res.">
        <title>Genome sequence of Blochmannia pennsylvanicus indicates parallel evolutionary trends among bacterial mutualists of insects.</title>
        <authorList>
            <person name="Degnan P.H."/>
            <person name="Lazarus A.B."/>
            <person name="Wernegreen J.J."/>
        </authorList>
    </citation>
    <scope>NUCLEOTIDE SEQUENCE [LARGE SCALE GENOMIC DNA]</scope>
    <source>
        <strain>BPEN</strain>
    </source>
</reference>
<dbReference type="EC" id="3.6.5.3" evidence="2"/>
<dbReference type="EMBL" id="CP000016">
    <property type="protein sequence ID" value="AAZ41190.1"/>
    <property type="molecule type" value="Genomic_DNA"/>
</dbReference>
<dbReference type="RefSeq" id="WP_011283101.1">
    <property type="nucleotide sequence ID" value="NC_007292.1"/>
</dbReference>
<dbReference type="SMR" id="Q492B2"/>
<dbReference type="STRING" id="291272.BPEN_584"/>
<dbReference type="KEGG" id="bpn:BPEN_584"/>
<dbReference type="eggNOG" id="COG0050">
    <property type="taxonomic scope" value="Bacteria"/>
</dbReference>
<dbReference type="HOGENOM" id="CLU_007265_0_0_6"/>
<dbReference type="OrthoDB" id="9803139at2"/>
<dbReference type="Proteomes" id="UP000007794">
    <property type="component" value="Chromosome"/>
</dbReference>
<dbReference type="GO" id="GO:0005829">
    <property type="term" value="C:cytosol"/>
    <property type="evidence" value="ECO:0007669"/>
    <property type="project" value="TreeGrafter"/>
</dbReference>
<dbReference type="GO" id="GO:0005525">
    <property type="term" value="F:GTP binding"/>
    <property type="evidence" value="ECO:0007669"/>
    <property type="project" value="UniProtKB-UniRule"/>
</dbReference>
<dbReference type="GO" id="GO:0003924">
    <property type="term" value="F:GTPase activity"/>
    <property type="evidence" value="ECO:0007669"/>
    <property type="project" value="InterPro"/>
</dbReference>
<dbReference type="GO" id="GO:0097216">
    <property type="term" value="F:guanosine tetraphosphate binding"/>
    <property type="evidence" value="ECO:0007669"/>
    <property type="project" value="UniProtKB-ARBA"/>
</dbReference>
<dbReference type="GO" id="GO:0003746">
    <property type="term" value="F:translation elongation factor activity"/>
    <property type="evidence" value="ECO:0007669"/>
    <property type="project" value="UniProtKB-UniRule"/>
</dbReference>
<dbReference type="CDD" id="cd01884">
    <property type="entry name" value="EF_Tu"/>
    <property type="match status" value="1"/>
</dbReference>
<dbReference type="CDD" id="cd03697">
    <property type="entry name" value="EFTU_II"/>
    <property type="match status" value="1"/>
</dbReference>
<dbReference type="CDD" id="cd03707">
    <property type="entry name" value="EFTU_III"/>
    <property type="match status" value="1"/>
</dbReference>
<dbReference type="FunFam" id="2.40.30.10:FF:000001">
    <property type="entry name" value="Elongation factor Tu"/>
    <property type="match status" value="1"/>
</dbReference>
<dbReference type="FunFam" id="3.40.50.300:FF:000003">
    <property type="entry name" value="Elongation factor Tu"/>
    <property type="match status" value="1"/>
</dbReference>
<dbReference type="Gene3D" id="3.40.50.300">
    <property type="entry name" value="P-loop containing nucleotide triphosphate hydrolases"/>
    <property type="match status" value="1"/>
</dbReference>
<dbReference type="Gene3D" id="2.40.30.10">
    <property type="entry name" value="Translation factors"/>
    <property type="match status" value="2"/>
</dbReference>
<dbReference type="HAMAP" id="MF_00118_B">
    <property type="entry name" value="EF_Tu_B"/>
    <property type="match status" value="1"/>
</dbReference>
<dbReference type="InterPro" id="IPR041709">
    <property type="entry name" value="EF-Tu_GTP-bd"/>
</dbReference>
<dbReference type="InterPro" id="IPR050055">
    <property type="entry name" value="EF-Tu_GTPase"/>
</dbReference>
<dbReference type="InterPro" id="IPR004161">
    <property type="entry name" value="EFTu-like_2"/>
</dbReference>
<dbReference type="InterPro" id="IPR033720">
    <property type="entry name" value="EFTU_2"/>
</dbReference>
<dbReference type="InterPro" id="IPR031157">
    <property type="entry name" value="G_TR_CS"/>
</dbReference>
<dbReference type="InterPro" id="IPR027417">
    <property type="entry name" value="P-loop_NTPase"/>
</dbReference>
<dbReference type="InterPro" id="IPR005225">
    <property type="entry name" value="Small_GTP-bd"/>
</dbReference>
<dbReference type="InterPro" id="IPR000795">
    <property type="entry name" value="T_Tr_GTP-bd_dom"/>
</dbReference>
<dbReference type="InterPro" id="IPR009000">
    <property type="entry name" value="Transl_B-barrel_sf"/>
</dbReference>
<dbReference type="InterPro" id="IPR009001">
    <property type="entry name" value="Transl_elong_EF1A/Init_IF2_C"/>
</dbReference>
<dbReference type="InterPro" id="IPR004541">
    <property type="entry name" value="Transl_elong_EFTu/EF1A_bac/org"/>
</dbReference>
<dbReference type="InterPro" id="IPR004160">
    <property type="entry name" value="Transl_elong_EFTu/EF1A_C"/>
</dbReference>
<dbReference type="NCBIfam" id="TIGR00485">
    <property type="entry name" value="EF-Tu"/>
    <property type="match status" value="1"/>
</dbReference>
<dbReference type="NCBIfam" id="NF000766">
    <property type="entry name" value="PRK00049.1"/>
    <property type="match status" value="1"/>
</dbReference>
<dbReference type="NCBIfam" id="NF009372">
    <property type="entry name" value="PRK12735.1"/>
    <property type="match status" value="1"/>
</dbReference>
<dbReference type="NCBIfam" id="NF009373">
    <property type="entry name" value="PRK12736.1"/>
    <property type="match status" value="1"/>
</dbReference>
<dbReference type="NCBIfam" id="TIGR00231">
    <property type="entry name" value="small_GTP"/>
    <property type="match status" value="1"/>
</dbReference>
<dbReference type="PANTHER" id="PTHR43721:SF22">
    <property type="entry name" value="ELONGATION FACTOR TU, MITOCHONDRIAL"/>
    <property type="match status" value="1"/>
</dbReference>
<dbReference type="PANTHER" id="PTHR43721">
    <property type="entry name" value="ELONGATION FACTOR TU-RELATED"/>
    <property type="match status" value="1"/>
</dbReference>
<dbReference type="Pfam" id="PF00009">
    <property type="entry name" value="GTP_EFTU"/>
    <property type="match status" value="1"/>
</dbReference>
<dbReference type="Pfam" id="PF03144">
    <property type="entry name" value="GTP_EFTU_D2"/>
    <property type="match status" value="1"/>
</dbReference>
<dbReference type="Pfam" id="PF03143">
    <property type="entry name" value="GTP_EFTU_D3"/>
    <property type="match status" value="1"/>
</dbReference>
<dbReference type="PRINTS" id="PR00315">
    <property type="entry name" value="ELONGATNFCT"/>
</dbReference>
<dbReference type="SUPFAM" id="SSF50465">
    <property type="entry name" value="EF-Tu/eEF-1alpha/eIF2-gamma C-terminal domain"/>
    <property type="match status" value="1"/>
</dbReference>
<dbReference type="SUPFAM" id="SSF52540">
    <property type="entry name" value="P-loop containing nucleoside triphosphate hydrolases"/>
    <property type="match status" value="1"/>
</dbReference>
<dbReference type="SUPFAM" id="SSF50447">
    <property type="entry name" value="Translation proteins"/>
    <property type="match status" value="1"/>
</dbReference>
<dbReference type="PROSITE" id="PS00301">
    <property type="entry name" value="G_TR_1"/>
    <property type="match status" value="1"/>
</dbReference>
<dbReference type="PROSITE" id="PS51722">
    <property type="entry name" value="G_TR_2"/>
    <property type="match status" value="1"/>
</dbReference>
<organism>
    <name type="scientific">Blochmanniella pennsylvanica (strain BPEN)</name>
    <dbReference type="NCBI Taxonomy" id="291272"/>
    <lineage>
        <taxon>Bacteria</taxon>
        <taxon>Pseudomonadati</taxon>
        <taxon>Pseudomonadota</taxon>
        <taxon>Gammaproteobacteria</taxon>
        <taxon>Enterobacterales</taxon>
        <taxon>Enterobacteriaceae</taxon>
        <taxon>ant endosymbionts</taxon>
        <taxon>Candidatus Blochmanniella</taxon>
    </lineage>
</organism>
<keyword id="KW-0963">Cytoplasm</keyword>
<keyword id="KW-0251">Elongation factor</keyword>
<keyword id="KW-0342">GTP-binding</keyword>
<keyword id="KW-0378">Hydrolase</keyword>
<keyword id="KW-0460">Magnesium</keyword>
<keyword id="KW-0479">Metal-binding</keyword>
<keyword id="KW-0547">Nucleotide-binding</keyword>
<keyword id="KW-0648">Protein biosynthesis</keyword>
<keyword id="KW-1185">Reference proteome</keyword>
<protein>
    <recommendedName>
        <fullName evidence="2">Elongation factor Tu</fullName>
        <shortName evidence="2">EF-Tu</shortName>
        <ecNumber evidence="2">3.6.5.3</ecNumber>
    </recommendedName>
</protein>